<organism>
    <name type="scientific">Haemophilus aegyptius</name>
    <dbReference type="NCBI Taxonomy" id="197575"/>
    <lineage>
        <taxon>Bacteria</taxon>
        <taxon>Pseudomonadati</taxon>
        <taxon>Pseudomonadota</taxon>
        <taxon>Gammaproteobacteria</taxon>
        <taxon>Pasteurellales</taxon>
        <taxon>Pasteurellaceae</taxon>
        <taxon>Haemophilus</taxon>
    </lineage>
</organism>
<accession>O68583</accession>
<protein>
    <recommendedName>
        <fullName>Chromosome partition protein MukB</fullName>
    </recommendedName>
    <alternativeName>
        <fullName>Structural maintenance of chromosome-related protein</fullName>
    </alternativeName>
</protein>
<proteinExistence type="inferred from homology"/>
<dbReference type="EMBL" id="AF051375">
    <property type="protein sequence ID" value="AAC05698.1"/>
    <property type="molecule type" value="Genomic_DNA"/>
</dbReference>
<dbReference type="SMR" id="O68583"/>
<dbReference type="GO" id="GO:0005737">
    <property type="term" value="C:cytoplasm"/>
    <property type="evidence" value="ECO:0007669"/>
    <property type="project" value="UniProtKB-KW"/>
</dbReference>
<dbReference type="GO" id="GO:0009295">
    <property type="term" value="C:nucleoid"/>
    <property type="evidence" value="ECO:0007669"/>
    <property type="project" value="UniProtKB-SubCell"/>
</dbReference>
<dbReference type="GO" id="GO:0003677">
    <property type="term" value="F:DNA binding"/>
    <property type="evidence" value="ECO:0007669"/>
    <property type="project" value="UniProtKB-KW"/>
</dbReference>
<dbReference type="GO" id="GO:0051301">
    <property type="term" value="P:cell division"/>
    <property type="evidence" value="ECO:0007669"/>
    <property type="project" value="UniProtKB-KW"/>
</dbReference>
<dbReference type="GO" id="GO:0030261">
    <property type="term" value="P:chromosome condensation"/>
    <property type="evidence" value="ECO:0007669"/>
    <property type="project" value="UniProtKB-KW"/>
</dbReference>
<dbReference type="GO" id="GO:0007059">
    <property type="term" value="P:chromosome segregation"/>
    <property type="evidence" value="ECO:0007669"/>
    <property type="project" value="UniProtKB-KW"/>
</dbReference>
<dbReference type="Gene3D" id="3.40.1140.10">
    <property type="match status" value="1"/>
</dbReference>
<dbReference type="InterPro" id="IPR050308">
    <property type="entry name" value="MukB/SMC"/>
</dbReference>
<dbReference type="PANTHER" id="PTHR42963">
    <property type="entry name" value="CHROMOSOME PARTITION PROTEIN MUKB"/>
    <property type="match status" value="1"/>
</dbReference>
<dbReference type="PANTHER" id="PTHR42963:SF1">
    <property type="entry name" value="DUF4476 DOMAIN-CONTAINING PROTEIN"/>
    <property type="match status" value="1"/>
</dbReference>
<dbReference type="Pfam" id="PF13558">
    <property type="entry name" value="SbcC_Walker_B"/>
    <property type="match status" value="1"/>
</dbReference>
<sequence>THAMLLDALSGQQDEYQDLFNDNRITFSEAMAKLYQRINPHIDMGQRTAQTIGEELLDYRNYLELEVEVFRGADGWLRAESGALSTGEAIGTGMSILLMVVQSWEEESRRIRGKDIVPCRLLFLDEAARLDGKSISTLFELCERLDMQLLIAAPENISPEKGTTYKLVRKIAGNQEHVHVVGLRGFGATE</sequence>
<name>MUKB_HAEAE</name>
<gene>
    <name type="primary">mukB</name>
</gene>
<evidence type="ECO:0000250" key="1"/>
<evidence type="ECO:0000305" key="2"/>
<reference key="1">
    <citation type="submission" date="1998-02" db="EMBL/GenBank/DDBJ databases">
        <authorList>
            <person name="Zhang B.-H."/>
            <person name="Wilson G.G."/>
        </authorList>
    </citation>
    <scope>NUCLEOTIDE SEQUENCE [GENOMIC DNA]</scope>
    <source>
        <strain>ATCC 11116 / CCUG 25716 / NCTC 8502 / 180-a</strain>
    </source>
</reference>
<feature type="chain" id="PRO_0000068218" description="Chromosome partition protein MukB">
    <location>
        <begin position="1" status="less than"/>
        <end position="190"/>
    </location>
</feature>
<feature type="non-terminal residue">
    <location>
        <position position="1"/>
    </location>
</feature>
<comment type="function">
    <text evidence="1">Plays a central role in chromosome condensation, segregation and cell cycle progression. Functions as a homodimer, which is essential for chromosome partition. Involved in negative DNA supercoiling in vivo, and by this means organize and compact chromosomes. May achieve or facilitate chromosome segregation by condensation DNA from both sides of a centrally located replisome during cell division (By similarity).</text>
</comment>
<comment type="subunit">
    <text evidence="1">Homodimerization via its hinge domain. Binds to DNA via its C-terminal region. Interacts, and probably forms a ternary complex, with MukE and MukF via its C-terminal region. The complex formation is stimulated by calcium or magnesium. Interacts with tubulin-related protein FtsZ (By similarity).</text>
</comment>
<comment type="subcellular location">
    <subcellularLocation>
        <location evidence="1">Cytoplasm</location>
        <location evidence="1">Nucleoid</location>
    </subcellularLocation>
    <text evidence="1">Restricted to the nucleoid region.</text>
</comment>
<comment type="domain">
    <text evidence="1">The hinge domain, which separates the large intramolecular coiled coil regions, allows the homodimerization, forming a V-shaped homodimer.</text>
</comment>
<comment type="similarity">
    <text evidence="2">Belongs to the SMC family. MukB subfamily.</text>
</comment>
<keyword id="KW-0131">Cell cycle</keyword>
<keyword id="KW-0132">Cell division</keyword>
<keyword id="KW-0159">Chromosome partition</keyword>
<keyword id="KW-0963">Cytoplasm</keyword>
<keyword id="KW-0226">DNA condensation</keyword>
<keyword id="KW-0238">DNA-binding</keyword>